<sequence>MAQIKITLVNSPIGRIPAQRKTVKALGLGKLNSSVVKEGSPAILGMVNSISHLVKVEEA</sequence>
<reference key="1">
    <citation type="journal article" date="2001" name="Genome Res.">
        <title>The complete genome sequence of the lactic acid bacterium Lactococcus lactis ssp. lactis IL1403.</title>
        <authorList>
            <person name="Bolotin A."/>
            <person name="Wincker P."/>
            <person name="Mauger S."/>
            <person name="Jaillon O."/>
            <person name="Malarme K."/>
            <person name="Weissenbach J."/>
            <person name="Ehrlich S.D."/>
            <person name="Sorokin A."/>
        </authorList>
    </citation>
    <scope>NUCLEOTIDE SEQUENCE [LARGE SCALE GENOMIC DNA]</scope>
    <source>
        <strain>IL1403</strain>
    </source>
</reference>
<dbReference type="EMBL" id="AE005176">
    <property type="protein sequence ID" value="AAK06178.1"/>
    <property type="molecule type" value="Genomic_DNA"/>
</dbReference>
<dbReference type="PIR" id="H86884">
    <property type="entry name" value="H86884"/>
</dbReference>
<dbReference type="RefSeq" id="NP_268237.1">
    <property type="nucleotide sequence ID" value="NC_002662.1"/>
</dbReference>
<dbReference type="RefSeq" id="WP_003129921.1">
    <property type="nucleotide sequence ID" value="NC_002662.1"/>
</dbReference>
<dbReference type="SMR" id="Q9CDY1"/>
<dbReference type="PaxDb" id="272623-L0424"/>
<dbReference type="EnsemblBacteria" id="AAK06178">
    <property type="protein sequence ID" value="AAK06178"/>
    <property type="gene ID" value="L0424"/>
</dbReference>
<dbReference type="GeneID" id="89634428"/>
<dbReference type="KEGG" id="lla:L0424"/>
<dbReference type="PATRIC" id="fig|272623.7.peg.2239"/>
<dbReference type="eggNOG" id="COG1841">
    <property type="taxonomic scope" value="Bacteria"/>
</dbReference>
<dbReference type="HOGENOM" id="CLU_131047_2_1_9"/>
<dbReference type="OrthoDB" id="9812790at2"/>
<dbReference type="Proteomes" id="UP000002196">
    <property type="component" value="Chromosome"/>
</dbReference>
<dbReference type="GO" id="GO:0022625">
    <property type="term" value="C:cytosolic large ribosomal subunit"/>
    <property type="evidence" value="ECO:0007669"/>
    <property type="project" value="TreeGrafter"/>
</dbReference>
<dbReference type="GO" id="GO:0003735">
    <property type="term" value="F:structural constituent of ribosome"/>
    <property type="evidence" value="ECO:0007669"/>
    <property type="project" value="InterPro"/>
</dbReference>
<dbReference type="GO" id="GO:0006412">
    <property type="term" value="P:translation"/>
    <property type="evidence" value="ECO:0007669"/>
    <property type="project" value="UniProtKB-UniRule"/>
</dbReference>
<dbReference type="CDD" id="cd01658">
    <property type="entry name" value="Ribosomal_L30"/>
    <property type="match status" value="1"/>
</dbReference>
<dbReference type="FunFam" id="3.30.1390.20:FF:000001">
    <property type="entry name" value="50S ribosomal protein L30"/>
    <property type="match status" value="1"/>
</dbReference>
<dbReference type="Gene3D" id="3.30.1390.20">
    <property type="entry name" value="Ribosomal protein L30, ferredoxin-like fold domain"/>
    <property type="match status" value="1"/>
</dbReference>
<dbReference type="HAMAP" id="MF_01371_B">
    <property type="entry name" value="Ribosomal_uL30_B"/>
    <property type="match status" value="1"/>
</dbReference>
<dbReference type="InterPro" id="IPR036919">
    <property type="entry name" value="Ribo_uL30_ferredoxin-like_sf"/>
</dbReference>
<dbReference type="InterPro" id="IPR005996">
    <property type="entry name" value="Ribosomal_uL30_bac-type"/>
</dbReference>
<dbReference type="InterPro" id="IPR018038">
    <property type="entry name" value="Ribosomal_uL30_CS"/>
</dbReference>
<dbReference type="InterPro" id="IPR016082">
    <property type="entry name" value="Ribosomal_uL30_ferredoxin-like"/>
</dbReference>
<dbReference type="NCBIfam" id="TIGR01308">
    <property type="entry name" value="rpmD_bact"/>
    <property type="match status" value="1"/>
</dbReference>
<dbReference type="PANTHER" id="PTHR15892:SF2">
    <property type="entry name" value="LARGE RIBOSOMAL SUBUNIT PROTEIN UL30M"/>
    <property type="match status" value="1"/>
</dbReference>
<dbReference type="PANTHER" id="PTHR15892">
    <property type="entry name" value="MITOCHONDRIAL RIBOSOMAL PROTEIN L30"/>
    <property type="match status" value="1"/>
</dbReference>
<dbReference type="Pfam" id="PF00327">
    <property type="entry name" value="Ribosomal_L30"/>
    <property type="match status" value="1"/>
</dbReference>
<dbReference type="PIRSF" id="PIRSF002211">
    <property type="entry name" value="Ribosomal_L30_bac-type"/>
    <property type="match status" value="1"/>
</dbReference>
<dbReference type="SUPFAM" id="SSF55129">
    <property type="entry name" value="Ribosomal protein L30p/L7e"/>
    <property type="match status" value="1"/>
</dbReference>
<dbReference type="PROSITE" id="PS00634">
    <property type="entry name" value="RIBOSOMAL_L30"/>
    <property type="match status" value="1"/>
</dbReference>
<name>RL30_LACLA</name>
<proteinExistence type="inferred from homology"/>
<comment type="subunit">
    <text evidence="1">Part of the 50S ribosomal subunit.</text>
</comment>
<comment type="similarity">
    <text evidence="1">Belongs to the universal ribosomal protein uL30 family.</text>
</comment>
<keyword id="KW-1185">Reference proteome</keyword>
<keyword id="KW-0687">Ribonucleoprotein</keyword>
<keyword id="KW-0689">Ribosomal protein</keyword>
<evidence type="ECO:0000255" key="1">
    <source>
        <dbReference type="HAMAP-Rule" id="MF_01371"/>
    </source>
</evidence>
<evidence type="ECO:0000305" key="2"/>
<feature type="chain" id="PRO_0000273801" description="Large ribosomal subunit protein uL30">
    <location>
        <begin position="1"/>
        <end position="59"/>
    </location>
</feature>
<protein>
    <recommendedName>
        <fullName evidence="1">Large ribosomal subunit protein uL30</fullName>
    </recommendedName>
    <alternativeName>
        <fullName evidence="2">50S ribosomal protein L30</fullName>
    </alternativeName>
</protein>
<accession>Q9CDY1</accession>
<organism>
    <name type="scientific">Lactococcus lactis subsp. lactis (strain IL1403)</name>
    <name type="common">Streptococcus lactis</name>
    <dbReference type="NCBI Taxonomy" id="272623"/>
    <lineage>
        <taxon>Bacteria</taxon>
        <taxon>Bacillati</taxon>
        <taxon>Bacillota</taxon>
        <taxon>Bacilli</taxon>
        <taxon>Lactobacillales</taxon>
        <taxon>Streptococcaceae</taxon>
        <taxon>Lactococcus</taxon>
    </lineage>
</organism>
<gene>
    <name evidence="1" type="primary">rpmD</name>
    <name type="ordered locus">LL2080</name>
    <name type="ORF">L0424</name>
</gene>